<sequence>MTTGFAAKDDVFARDILSVAQLNQAVGQLMERSIPPLWVRGEVSNFTQAASGHWYFTLKDAGAAVRTVMFRGRASMVGFVPRPGDEVEIRGRVSLYEPRGDYQLQADAMRRAGVGNLFEAFSRLKDKLASEGLFDASRKRVPLRLPRAIGVVTSLQAAALRDVLSALARRAPQVEIVIYPAPVQGADAASRLAAQVRQASARREVDTLLLVRGGGSIEDLWSFNDEDLARAVADCAIPVISGVGHETDFTIADFVADLRAPTPTAAAELACVPRAELLSALGHAASRLSRAQQRRLDLAAQRLDRASAQLVSPAQRLAHQCERLNTLRHRLAASAQRPLAASAARLTGLAQRLARRAPQTARVQDRVQSLAQRLLRGQQAGLAERGVRLQALAAQLRALDPEHTLARGYAVLRDAQGRVVSNASALVVGEGVRIDLAQGRVQADITDVQPRR</sequence>
<protein>
    <recommendedName>
        <fullName evidence="1">Exodeoxyribonuclease 7 large subunit</fullName>
        <ecNumber evidence="1">3.1.11.6</ecNumber>
    </recommendedName>
    <alternativeName>
        <fullName evidence="1">Exodeoxyribonuclease VII large subunit</fullName>
        <shortName evidence="1">Exonuclease VII large subunit</shortName>
    </alternativeName>
</protein>
<dbReference type="EC" id="3.1.11.6" evidence="1"/>
<dbReference type="EMBL" id="AM167904">
    <property type="protein sequence ID" value="CAJ49707.1"/>
    <property type="molecule type" value="Genomic_DNA"/>
</dbReference>
<dbReference type="RefSeq" id="WP_012417763.1">
    <property type="nucleotide sequence ID" value="NC_010645.1"/>
</dbReference>
<dbReference type="SMR" id="Q2KZF3"/>
<dbReference type="STRING" id="360910.BAV2097"/>
<dbReference type="GeneID" id="92934844"/>
<dbReference type="KEGG" id="bav:BAV2097"/>
<dbReference type="eggNOG" id="COG1570">
    <property type="taxonomic scope" value="Bacteria"/>
</dbReference>
<dbReference type="HOGENOM" id="CLU_023625_3_1_4"/>
<dbReference type="OrthoDB" id="9802795at2"/>
<dbReference type="Proteomes" id="UP000001977">
    <property type="component" value="Chromosome"/>
</dbReference>
<dbReference type="GO" id="GO:0005737">
    <property type="term" value="C:cytoplasm"/>
    <property type="evidence" value="ECO:0007669"/>
    <property type="project" value="UniProtKB-SubCell"/>
</dbReference>
<dbReference type="GO" id="GO:0009318">
    <property type="term" value="C:exodeoxyribonuclease VII complex"/>
    <property type="evidence" value="ECO:0007669"/>
    <property type="project" value="InterPro"/>
</dbReference>
<dbReference type="GO" id="GO:0008855">
    <property type="term" value="F:exodeoxyribonuclease VII activity"/>
    <property type="evidence" value="ECO:0007669"/>
    <property type="project" value="UniProtKB-UniRule"/>
</dbReference>
<dbReference type="GO" id="GO:0003676">
    <property type="term" value="F:nucleic acid binding"/>
    <property type="evidence" value="ECO:0007669"/>
    <property type="project" value="InterPro"/>
</dbReference>
<dbReference type="GO" id="GO:0006308">
    <property type="term" value="P:DNA catabolic process"/>
    <property type="evidence" value="ECO:0007669"/>
    <property type="project" value="UniProtKB-UniRule"/>
</dbReference>
<dbReference type="CDD" id="cd04489">
    <property type="entry name" value="ExoVII_LU_OBF"/>
    <property type="match status" value="1"/>
</dbReference>
<dbReference type="HAMAP" id="MF_00378">
    <property type="entry name" value="Exonuc_7_L"/>
    <property type="match status" value="1"/>
</dbReference>
<dbReference type="InterPro" id="IPR003753">
    <property type="entry name" value="Exonuc_VII_L"/>
</dbReference>
<dbReference type="InterPro" id="IPR020579">
    <property type="entry name" value="Exonuc_VII_lsu_C"/>
</dbReference>
<dbReference type="InterPro" id="IPR025824">
    <property type="entry name" value="OB-fold_nuc-bd_dom"/>
</dbReference>
<dbReference type="NCBIfam" id="TIGR00237">
    <property type="entry name" value="xseA"/>
    <property type="match status" value="1"/>
</dbReference>
<dbReference type="PANTHER" id="PTHR30008">
    <property type="entry name" value="EXODEOXYRIBONUCLEASE 7 LARGE SUBUNIT"/>
    <property type="match status" value="1"/>
</dbReference>
<dbReference type="PANTHER" id="PTHR30008:SF0">
    <property type="entry name" value="EXODEOXYRIBONUCLEASE 7 LARGE SUBUNIT"/>
    <property type="match status" value="1"/>
</dbReference>
<dbReference type="Pfam" id="PF02601">
    <property type="entry name" value="Exonuc_VII_L"/>
    <property type="match status" value="1"/>
</dbReference>
<dbReference type="Pfam" id="PF13742">
    <property type="entry name" value="tRNA_anti_2"/>
    <property type="match status" value="1"/>
</dbReference>
<gene>
    <name evidence="1" type="primary">xseA</name>
    <name type="ordered locus">BAV2097</name>
</gene>
<reference key="1">
    <citation type="journal article" date="2006" name="J. Bacteriol.">
        <title>Comparison of the genome sequence of the poultry pathogen Bordetella avium with those of B. bronchiseptica, B. pertussis, and B. parapertussis reveals extensive diversity in surface structures associated with host interaction.</title>
        <authorList>
            <person name="Sebaihia M."/>
            <person name="Preston A."/>
            <person name="Maskell D.J."/>
            <person name="Kuzmiak H."/>
            <person name="Connell T.D."/>
            <person name="King N.D."/>
            <person name="Orndorff P.E."/>
            <person name="Miyamoto D.M."/>
            <person name="Thomson N.R."/>
            <person name="Harris D."/>
            <person name="Goble A."/>
            <person name="Lord A."/>
            <person name="Murphy L."/>
            <person name="Quail M.A."/>
            <person name="Rutter S."/>
            <person name="Squares R."/>
            <person name="Squares S."/>
            <person name="Woodward J."/>
            <person name="Parkhill J."/>
            <person name="Temple L.M."/>
        </authorList>
    </citation>
    <scope>NUCLEOTIDE SEQUENCE [LARGE SCALE GENOMIC DNA]</scope>
    <source>
        <strain>197N</strain>
    </source>
</reference>
<comment type="function">
    <text evidence="1">Bidirectionally degrades single-stranded DNA into large acid-insoluble oligonucleotides, which are then degraded further into small acid-soluble oligonucleotides.</text>
</comment>
<comment type="catalytic activity">
    <reaction evidence="1">
        <text>Exonucleolytic cleavage in either 5'- to 3'- or 3'- to 5'-direction to yield nucleoside 5'-phosphates.</text>
        <dbReference type="EC" id="3.1.11.6"/>
    </reaction>
</comment>
<comment type="subunit">
    <text evidence="1">Heterooligomer composed of large and small subunits.</text>
</comment>
<comment type="subcellular location">
    <subcellularLocation>
        <location evidence="1">Cytoplasm</location>
    </subcellularLocation>
</comment>
<comment type="similarity">
    <text evidence="1">Belongs to the XseA family.</text>
</comment>
<feature type="chain" id="PRO_0000303776" description="Exodeoxyribonuclease 7 large subunit">
    <location>
        <begin position="1"/>
        <end position="452"/>
    </location>
</feature>
<evidence type="ECO:0000255" key="1">
    <source>
        <dbReference type="HAMAP-Rule" id="MF_00378"/>
    </source>
</evidence>
<organism>
    <name type="scientific">Bordetella avium (strain 197N)</name>
    <dbReference type="NCBI Taxonomy" id="360910"/>
    <lineage>
        <taxon>Bacteria</taxon>
        <taxon>Pseudomonadati</taxon>
        <taxon>Pseudomonadota</taxon>
        <taxon>Betaproteobacteria</taxon>
        <taxon>Burkholderiales</taxon>
        <taxon>Alcaligenaceae</taxon>
        <taxon>Bordetella</taxon>
    </lineage>
</organism>
<keyword id="KW-0963">Cytoplasm</keyword>
<keyword id="KW-0269">Exonuclease</keyword>
<keyword id="KW-0378">Hydrolase</keyword>
<keyword id="KW-0540">Nuclease</keyword>
<keyword id="KW-1185">Reference proteome</keyword>
<name>EX7L_BORA1</name>
<proteinExistence type="inferred from homology"/>
<accession>Q2KZF3</accession>